<name>PPN2_YEAST</name>
<comment type="function">
    <text evidence="5 6">Catalyzes the hydrolysis of inorganic polyphosphate (polyP) chains of many hundreds of phosphate residues into shorter lengths. Exclusively shows endopolyphosphatase activity, cleaving inside the polyP chain. Together with PPN1, responsible for a substantial fraction of polyphosphatase activity that is necessary to mobilize polyP stores in response to phosphate scarcity.</text>
</comment>
<comment type="catalytic activity">
    <reaction evidence="5 6">
        <text>[phosphate](n+1) + n H2O = (n+1) phosphate + n H(+)</text>
        <dbReference type="Rhea" id="RHEA:22452"/>
        <dbReference type="Rhea" id="RHEA-COMP:14280"/>
        <dbReference type="ChEBI" id="CHEBI:15377"/>
        <dbReference type="ChEBI" id="CHEBI:15378"/>
        <dbReference type="ChEBI" id="CHEBI:16838"/>
        <dbReference type="ChEBI" id="CHEBI:43474"/>
        <dbReference type="EC" id="3.6.1.10"/>
    </reaction>
    <physiologicalReaction direction="left-to-right" evidence="5 6">
        <dbReference type="Rhea" id="RHEA:22453"/>
    </physiologicalReaction>
</comment>
<comment type="cofactor">
    <cofactor evidence="5 6">
        <name>Zn(2+)</name>
        <dbReference type="ChEBI" id="CHEBI:29105"/>
    </cofactor>
    <cofactor evidence="5 6">
        <name>Co(2+)</name>
        <dbReference type="ChEBI" id="CHEBI:48828"/>
    </cofactor>
    <cofactor evidence="6">
        <name>Mg(2+)</name>
        <dbReference type="ChEBI" id="CHEBI:18420"/>
    </cofactor>
    <text evidence="9">The yeast vacuole plays an important role in Zn(2+) storing and sequestering. Therefore, the changes in Zn(2+) concentration may regulate the enzyme's activity.</text>
</comment>
<comment type="activity regulation">
    <text evidence="6">Not sensitive to heparin inhibition.</text>
</comment>
<comment type="biophysicochemical properties">
    <kinetics>
        <Vmax evidence="6">0.1 umol/min/mg enzyme with polyP(208) as substrate for the exopolyphosphatase reaction</Vmax>
    </kinetics>
</comment>
<comment type="subunit">
    <text evidence="5">Interacts with PPN1.</text>
</comment>
<comment type="subcellular location">
    <subcellularLocation>
        <location evidence="3 4 5">Vacuole membrane</location>
        <topology evidence="1">Single-pass membrane protein</topology>
    </subcellularLocation>
</comment>
<comment type="similarity">
    <text evidence="8">Belongs to the metallophosphoesterase superfamily.</text>
</comment>
<accession>P40152</accession>
<accession>D6W0X3</accession>
<keyword id="KW-0903">Direct protein sequencing</keyword>
<keyword id="KW-0325">Glycoprotein</keyword>
<keyword id="KW-0378">Hydrolase</keyword>
<keyword id="KW-0472">Membrane</keyword>
<keyword id="KW-1185">Reference proteome</keyword>
<keyword id="KW-0812">Transmembrane</keyword>
<keyword id="KW-1133">Transmembrane helix</keyword>
<keyword id="KW-0926">Vacuole</keyword>
<reference key="1">
    <citation type="journal article" date="1995" name="Yeast">
        <title>The sequence of a 13.5 kb DNA segment from the left arm of yeast chromosome XIV reveals MER1; RAP1; a new putative member of the DNA replication complex and a new putative serine/threonine phosphatase gene.</title>
        <authorList>
            <person name="Coster F."/>
            <person name="van Dyck L."/>
            <person name="Jonniaux J.-L."/>
            <person name="Purnelle B."/>
            <person name="Goffeau A."/>
        </authorList>
    </citation>
    <scope>NUCLEOTIDE SEQUENCE [GENOMIC DNA]</scope>
    <source>
        <strain>ATCC 96604 / S288c / FY1679</strain>
    </source>
</reference>
<reference key="2">
    <citation type="journal article" date="1997" name="Nature">
        <title>The nucleotide sequence of Saccharomyces cerevisiae chromosome XIV and its evolutionary implications.</title>
        <authorList>
            <person name="Philippsen P."/>
            <person name="Kleine K."/>
            <person name="Poehlmann R."/>
            <person name="Duesterhoeft A."/>
            <person name="Hamberg K."/>
            <person name="Hegemann J.H."/>
            <person name="Obermaier B."/>
            <person name="Urrestarazu L.A."/>
            <person name="Aert R."/>
            <person name="Albermann K."/>
            <person name="Altmann R."/>
            <person name="Andre B."/>
            <person name="Baladron V."/>
            <person name="Ballesta J.P.G."/>
            <person name="Becam A.-M."/>
            <person name="Beinhauer J.D."/>
            <person name="Boskovic J."/>
            <person name="Buitrago M.J."/>
            <person name="Bussereau F."/>
            <person name="Coster F."/>
            <person name="Crouzet M."/>
            <person name="D'Angelo M."/>
            <person name="Dal Pero F."/>
            <person name="De Antoni A."/>
            <person name="del Rey F."/>
            <person name="Doignon F."/>
            <person name="Domdey H."/>
            <person name="Dubois E."/>
            <person name="Fiedler T.A."/>
            <person name="Fleig U."/>
            <person name="Floeth M."/>
            <person name="Fritz C."/>
            <person name="Gaillardin C."/>
            <person name="Garcia-Cantalejo J.M."/>
            <person name="Glansdorff N."/>
            <person name="Goffeau A."/>
            <person name="Gueldener U."/>
            <person name="Herbert C.J."/>
            <person name="Heumann K."/>
            <person name="Heuss-Neitzel D."/>
            <person name="Hilbert H."/>
            <person name="Hinni K."/>
            <person name="Iraqui Houssaini I."/>
            <person name="Jacquet M."/>
            <person name="Jimenez A."/>
            <person name="Jonniaux J.-L."/>
            <person name="Karpfinger-Hartl L."/>
            <person name="Lanfranchi G."/>
            <person name="Lepingle A."/>
            <person name="Levesque H."/>
            <person name="Lyck R."/>
            <person name="Maftahi M."/>
            <person name="Mallet L."/>
            <person name="Maurer C.T.C."/>
            <person name="Messenguy F."/>
            <person name="Mewes H.-W."/>
            <person name="Moestl D."/>
            <person name="Nasr F."/>
            <person name="Nicaud J.-M."/>
            <person name="Niedenthal R.K."/>
            <person name="Pandolfo D."/>
            <person name="Pierard A."/>
            <person name="Piravandi E."/>
            <person name="Planta R.J."/>
            <person name="Pohl T.M."/>
            <person name="Purnelle B."/>
            <person name="Rebischung C."/>
            <person name="Remacha M.A."/>
            <person name="Revuelta J.L."/>
            <person name="Rinke M."/>
            <person name="Saiz J.E."/>
            <person name="Sartorello F."/>
            <person name="Scherens B."/>
            <person name="Sen-Gupta M."/>
            <person name="Soler-Mira A."/>
            <person name="Urbanus J.H.M."/>
            <person name="Valle G."/>
            <person name="Van Dyck L."/>
            <person name="Verhasselt P."/>
            <person name="Vierendeels F."/>
            <person name="Vissers S."/>
            <person name="Voet M."/>
            <person name="Volckaert G."/>
            <person name="Wach A."/>
            <person name="Wambutt R."/>
            <person name="Wedler H."/>
            <person name="Zollner A."/>
            <person name="Hani J."/>
        </authorList>
    </citation>
    <scope>NUCLEOTIDE SEQUENCE [LARGE SCALE GENOMIC DNA]</scope>
    <source>
        <strain>ATCC 204508 / S288c</strain>
    </source>
</reference>
<reference key="3">
    <citation type="journal article" date="2014" name="G3 (Bethesda)">
        <title>The reference genome sequence of Saccharomyces cerevisiae: Then and now.</title>
        <authorList>
            <person name="Engel S.R."/>
            <person name="Dietrich F.S."/>
            <person name="Fisk D.G."/>
            <person name="Binkley G."/>
            <person name="Balakrishnan R."/>
            <person name="Costanzo M.C."/>
            <person name="Dwight S.S."/>
            <person name="Hitz B.C."/>
            <person name="Karra K."/>
            <person name="Nash R.S."/>
            <person name="Weng S."/>
            <person name="Wong E.D."/>
            <person name="Lloyd P."/>
            <person name="Skrzypek M.S."/>
            <person name="Miyasato S.R."/>
            <person name="Simison M."/>
            <person name="Cherry J.M."/>
        </authorList>
    </citation>
    <scope>GENOME REANNOTATION</scope>
    <source>
        <strain>ATCC 204508 / S288c</strain>
    </source>
</reference>
<reference key="4">
    <citation type="journal article" date="2007" name="Genome Res.">
        <title>Approaching a complete repository of sequence-verified protein-encoding clones for Saccharomyces cerevisiae.</title>
        <authorList>
            <person name="Hu Y."/>
            <person name="Rolfs A."/>
            <person name="Bhullar B."/>
            <person name="Murthy T.V.S."/>
            <person name="Zhu C."/>
            <person name="Berger M.F."/>
            <person name="Camargo A.A."/>
            <person name="Kelley F."/>
            <person name="McCarron S."/>
            <person name="Jepson D."/>
            <person name="Richardson A."/>
            <person name="Raphael J."/>
            <person name="Moreira D."/>
            <person name="Taycher E."/>
            <person name="Zuo D."/>
            <person name="Mohr S."/>
            <person name="Kane M.F."/>
            <person name="Williamson J."/>
            <person name="Simpson A.J.G."/>
            <person name="Bulyk M.L."/>
            <person name="Harlow E."/>
            <person name="Marsischky G."/>
            <person name="Kolodner R.D."/>
            <person name="LaBaer J."/>
        </authorList>
    </citation>
    <scope>NUCLEOTIDE SEQUENCE [GENOMIC DNA]</scope>
    <source>
        <strain>ATCC 204508 / S288c</strain>
    </source>
</reference>
<reference key="5">
    <citation type="submission" date="2005-06" db="UniProtKB">
        <authorList>
            <person name="Bienvenut W.V."/>
            <person name="Peters C."/>
        </authorList>
    </citation>
    <scope>PROTEIN SEQUENCE OF 149-168; 257-272 AND 313-326</scope>
    <scope>IDENTIFICATION BY MASS SPECTROMETRY</scope>
</reference>
<reference key="6">
    <citation type="journal article" date="2003" name="Nature">
        <title>Global analysis of protein localization in budding yeast.</title>
        <authorList>
            <person name="Huh W.-K."/>
            <person name="Falvo J.V."/>
            <person name="Gerke L.C."/>
            <person name="Carroll A.S."/>
            <person name="Howson R.W."/>
            <person name="Weissman J.S."/>
            <person name="O'Shea E.K."/>
        </authorList>
    </citation>
    <scope>SUBCELLULAR LOCATION [LARGE SCALE ANALYSIS]</scope>
</reference>
<reference key="7">
    <citation type="journal article" date="2013" name="Protoplasma">
        <title>Organelle acidification is important for localisation of vacuolar proteins in Saccharomyces cerevisiae.</title>
        <authorList>
            <person name="Matsumoto R."/>
            <person name="Suzuki K."/>
            <person name="Ohya Y."/>
        </authorList>
    </citation>
    <scope>SUBCELLULAR LOCATION</scope>
</reference>
<reference key="8">
    <citation type="journal article" date="2017" name="J. Cell Sci.">
        <title>Ppn2, a novel Zn2+-dependent polyphosphatase in the acidocalcisome-like yeast vacuole.</title>
        <authorList>
            <person name="Gerasimaite R."/>
            <person name="Mayer A."/>
        </authorList>
    </citation>
    <scope>FUNCTION</scope>
    <scope>CATALYTIC ACTIVITY</scope>
    <scope>COFACTOR</scope>
    <scope>SUBCELLULAR LOCATION</scope>
    <scope>TOPOLOGY</scope>
    <scope>MUTAGENESIS OF ASP-68 AND ASP-98</scope>
    <scope>INTERACTION WITH PPN1</scope>
</reference>
<reference key="9">
    <citation type="journal article" date="2019" name="Biochimie">
        <title>Ppn2 endopolyphosphatase overexpressed in Saccharomyces cerevisiae: Comparison with Ppn1, Ppx1, and Ddp1 polyphosphatases.</title>
        <authorList>
            <person name="Andreeva N."/>
            <person name="Ledova L."/>
            <person name="Ryazanova L."/>
            <person name="Tomashevsky A."/>
            <person name="Kulakovskaya T."/>
            <person name="Eldarov M."/>
        </authorList>
    </citation>
    <scope>FUNCTION</scope>
    <scope>CATALYTIC ACTIVITY</scope>
    <scope>BIOPHYSICOCHEMICAL PROPERTIES</scope>
    <scope>ACTIVITY REGULATION</scope>
    <scope>COFACTOR</scope>
</reference>
<feature type="chain" id="PRO_0000042987" description="Zinc-dependent endopolyphosphatase">
    <location>
        <begin position="1"/>
        <end position="326"/>
    </location>
</feature>
<feature type="topological domain" description="Cytoplasmic" evidence="5">
    <location>
        <begin position="1"/>
        <end position="9"/>
    </location>
</feature>
<feature type="transmembrane region" description="Helical" evidence="1">
    <location>
        <begin position="10"/>
        <end position="30"/>
    </location>
</feature>
<feature type="topological domain" description="Vacuolar" evidence="5">
    <location>
        <begin position="31"/>
        <end position="326"/>
    </location>
</feature>
<feature type="glycosylation site" description="N-linked (GlcNAc...) asparagine" evidence="2">
    <location>
        <position position="90"/>
    </location>
</feature>
<feature type="glycosylation site" description="N-linked (GlcNAc...) asparagine" evidence="2">
    <location>
        <position position="241"/>
    </location>
</feature>
<feature type="mutagenesis site" description="Almost completely abolishes polyphosphatase activity." evidence="5">
    <original>D</original>
    <variation>N</variation>
    <location>
        <position position="68"/>
    </location>
</feature>
<feature type="mutagenesis site" description="Almost completely abolishes polyphosphatase activity." evidence="5">
    <original>D</original>
    <variation>N</variation>
    <location>
        <position position="98"/>
    </location>
</feature>
<gene>
    <name evidence="7" type="primary">PPN2</name>
    <name evidence="10" type="ordered locus">YNL217W</name>
    <name type="ORF">N1306</name>
</gene>
<evidence type="ECO:0000255" key="1"/>
<evidence type="ECO:0000255" key="2">
    <source>
        <dbReference type="PROSITE-ProRule" id="PRU00498"/>
    </source>
</evidence>
<evidence type="ECO:0000269" key="3">
    <source>
    </source>
</evidence>
<evidence type="ECO:0000269" key="4">
    <source>
    </source>
</evidence>
<evidence type="ECO:0000269" key="5">
    <source>
    </source>
</evidence>
<evidence type="ECO:0000269" key="6">
    <source>
    </source>
</evidence>
<evidence type="ECO:0000303" key="7">
    <source>
    </source>
</evidence>
<evidence type="ECO:0000305" key="8"/>
<evidence type="ECO:0000305" key="9">
    <source>
    </source>
</evidence>
<evidence type="ECO:0000312" key="10">
    <source>
        <dbReference type="SGD" id="S000005161"/>
    </source>
</evidence>
<protein>
    <recommendedName>
        <fullName evidence="7">Zinc-dependent endopolyphosphatase</fullName>
        <ecNumber evidence="5">3.6.1.10</ecNumber>
    </recommendedName>
    <alternativeName>
        <fullName>Vacuolar polyphosphatase PPN2</fullName>
    </alternativeName>
</protein>
<organism>
    <name type="scientific">Saccharomyces cerevisiae (strain ATCC 204508 / S288c)</name>
    <name type="common">Baker's yeast</name>
    <dbReference type="NCBI Taxonomy" id="559292"/>
    <lineage>
        <taxon>Eukaryota</taxon>
        <taxon>Fungi</taxon>
        <taxon>Dikarya</taxon>
        <taxon>Ascomycota</taxon>
        <taxon>Saccharomycotina</taxon>
        <taxon>Saccharomycetes</taxon>
        <taxon>Saccharomycetales</taxon>
        <taxon>Saccharomycetaceae</taxon>
        <taxon>Saccharomyces</taxon>
    </lineage>
</organism>
<sequence>MEDKRKRRAATLSTALILFVACCVYTLYIFKFDNPRLSPPVSLLPTISTLKKIEHVTDLNKEYVFVGDVHGNYDEFIELIDDKIGGLGENITMILLGDFIHKGPDSDKVVSYILNHKDQVKCVLGNHEILVMMAYLNPDFSKWVRRPKLMTPLTFSTETNFIPQDISKISNAHGRLARELGFSKLSQLAEHCSMAIELDLDITGDILFGAHAGMVPGDFMKPNQIPGVSSLSNMKYVDKKNWSKTSREKENKNYVRWYTLWDKYGDHFSNAKVFYGHDASMGLNLRRQTKGLDTACIKNNLLSSMKVKYDIKKGQYDYELIQVQCS</sequence>
<proteinExistence type="evidence at protein level"/>
<dbReference type="EC" id="3.6.1.10" evidence="5"/>
<dbReference type="EMBL" id="X78898">
    <property type="protein sequence ID" value="CAA55490.1"/>
    <property type="molecule type" value="Genomic_DNA"/>
</dbReference>
<dbReference type="EMBL" id="Z71493">
    <property type="protein sequence ID" value="CAA96119.1"/>
    <property type="molecule type" value="Genomic_DNA"/>
</dbReference>
<dbReference type="EMBL" id="AY558018">
    <property type="protein sequence ID" value="AAS56344.1"/>
    <property type="molecule type" value="Genomic_DNA"/>
</dbReference>
<dbReference type="EMBL" id="BK006947">
    <property type="protein sequence ID" value="DAA10339.1"/>
    <property type="molecule type" value="Genomic_DNA"/>
</dbReference>
<dbReference type="PIR" id="S50713">
    <property type="entry name" value="S50713"/>
</dbReference>
<dbReference type="RefSeq" id="NP_014182.1">
    <property type="nucleotide sequence ID" value="NM_001183055.1"/>
</dbReference>
<dbReference type="SMR" id="P40152"/>
<dbReference type="BioGRID" id="35619">
    <property type="interactions" value="55"/>
</dbReference>
<dbReference type="DIP" id="DIP-4934N"/>
<dbReference type="FunCoup" id="P40152">
    <property type="interactions" value="98"/>
</dbReference>
<dbReference type="IntAct" id="P40152">
    <property type="interactions" value="10"/>
</dbReference>
<dbReference type="MINT" id="P40152"/>
<dbReference type="STRING" id="4932.YNL217W"/>
<dbReference type="GlyGen" id="P40152">
    <property type="glycosylation" value="2 sites"/>
</dbReference>
<dbReference type="PaxDb" id="4932-YNL217W"/>
<dbReference type="PeptideAtlas" id="P40152"/>
<dbReference type="EnsemblFungi" id="YNL217W_mRNA">
    <property type="protein sequence ID" value="YNL217W"/>
    <property type="gene ID" value="YNL217W"/>
</dbReference>
<dbReference type="GeneID" id="855504"/>
<dbReference type="KEGG" id="sce:YNL217W"/>
<dbReference type="AGR" id="SGD:S000005161"/>
<dbReference type="SGD" id="S000005161">
    <property type="gene designation" value="PPN2"/>
</dbReference>
<dbReference type="VEuPathDB" id="FungiDB:YNL217W"/>
<dbReference type="eggNOG" id="KOG0371">
    <property type="taxonomic scope" value="Eukaryota"/>
</dbReference>
<dbReference type="HOGENOM" id="CLU_023125_0_1_1"/>
<dbReference type="InParanoid" id="P40152"/>
<dbReference type="OMA" id="WLDTCPV"/>
<dbReference type="OrthoDB" id="10267127at2759"/>
<dbReference type="BioCyc" id="YEAST:G3O-33223-MONOMER"/>
<dbReference type="BRENDA" id="3.6.1.10">
    <property type="organism ID" value="984"/>
</dbReference>
<dbReference type="BioGRID-ORCS" id="855504">
    <property type="hits" value="1 hit in 10 CRISPR screens"/>
</dbReference>
<dbReference type="PRO" id="PR:P40152"/>
<dbReference type="Proteomes" id="UP000002311">
    <property type="component" value="Chromosome XIV"/>
</dbReference>
<dbReference type="RNAct" id="P40152">
    <property type="molecule type" value="protein"/>
</dbReference>
<dbReference type="GO" id="GO:0005737">
    <property type="term" value="C:cytoplasm"/>
    <property type="evidence" value="ECO:0000318"/>
    <property type="project" value="GO_Central"/>
</dbReference>
<dbReference type="GO" id="GO:0000324">
    <property type="term" value="C:fungal-type vacuole"/>
    <property type="evidence" value="ECO:0000314"/>
    <property type="project" value="SGD"/>
</dbReference>
<dbReference type="GO" id="GO:0000329">
    <property type="term" value="C:fungal-type vacuole membrane"/>
    <property type="evidence" value="ECO:0007005"/>
    <property type="project" value="SGD"/>
</dbReference>
<dbReference type="GO" id="GO:0005775">
    <property type="term" value="C:vacuolar lumen"/>
    <property type="evidence" value="ECO:0000314"/>
    <property type="project" value="SGD"/>
</dbReference>
<dbReference type="GO" id="GO:0000298">
    <property type="term" value="F:endopolyphosphatase activity"/>
    <property type="evidence" value="ECO:0000314"/>
    <property type="project" value="SGD"/>
</dbReference>
<dbReference type="GO" id="GO:0016791">
    <property type="term" value="F:phosphatase activity"/>
    <property type="evidence" value="ECO:0000318"/>
    <property type="project" value="GO_Central"/>
</dbReference>
<dbReference type="GO" id="GO:0016036">
    <property type="term" value="P:cellular response to phosphate starvation"/>
    <property type="evidence" value="ECO:0000316"/>
    <property type="project" value="SGD"/>
</dbReference>
<dbReference type="GO" id="GO:0006798">
    <property type="term" value="P:polyphosphate catabolic process"/>
    <property type="evidence" value="ECO:0000314"/>
    <property type="project" value="SGD"/>
</dbReference>
<dbReference type="CDD" id="cd00144">
    <property type="entry name" value="MPP_PPP_family"/>
    <property type="match status" value="1"/>
</dbReference>
<dbReference type="FunFam" id="3.60.21.10:FF:000112">
    <property type="entry name" value="YNL217W-like protein"/>
    <property type="match status" value="1"/>
</dbReference>
<dbReference type="Gene3D" id="3.60.21.10">
    <property type="match status" value="1"/>
</dbReference>
<dbReference type="InterPro" id="IPR050126">
    <property type="entry name" value="Ap4A_hydrolase"/>
</dbReference>
<dbReference type="InterPro" id="IPR004843">
    <property type="entry name" value="Calcineurin-like_PHP_ApaH"/>
</dbReference>
<dbReference type="InterPro" id="IPR029052">
    <property type="entry name" value="Metallo-depent_PP-like"/>
</dbReference>
<dbReference type="PANTHER" id="PTHR42850">
    <property type="entry name" value="METALLOPHOSPHOESTERASE"/>
    <property type="match status" value="1"/>
</dbReference>
<dbReference type="PANTHER" id="PTHR42850:SF4">
    <property type="entry name" value="ZINC-DEPENDENT ENDOPOLYPHOSPHATASE"/>
    <property type="match status" value="1"/>
</dbReference>
<dbReference type="Pfam" id="PF00149">
    <property type="entry name" value="Metallophos"/>
    <property type="match status" value="1"/>
</dbReference>
<dbReference type="SUPFAM" id="SSF56300">
    <property type="entry name" value="Metallo-dependent phosphatases"/>
    <property type="match status" value="1"/>
</dbReference>